<sequence length="213" mass="23592">MPKLMLALDVLDRDRALKIVEDVKDYVDAIKVGYPLVLSTGTEIIKEIKKLCNKEVIADFKVADIPATNEKIAKITLKYADGIIVHGFVGEDSVKAVQDVAKKLNKKVIMVTEMSHPGAVQFLQPIADKLSEMAKKLKVDAIVAPSTRPERLKEIKEIAELPVITPGVGAQGGKIEDILNILDENDYVIVGRAIYQSQNPKEEAKKYKEMLNK</sequence>
<reference key="1">
    <citation type="journal article" date="1996" name="Science">
        <title>Complete genome sequence of the methanogenic archaeon, Methanococcus jannaschii.</title>
        <authorList>
            <person name="Bult C.J."/>
            <person name="White O."/>
            <person name="Olsen G.J."/>
            <person name="Zhou L."/>
            <person name="Fleischmann R.D."/>
            <person name="Sutton G.G."/>
            <person name="Blake J.A."/>
            <person name="FitzGerald L.M."/>
            <person name="Clayton R.A."/>
            <person name="Gocayne J.D."/>
            <person name="Kerlavage A.R."/>
            <person name="Dougherty B.A."/>
            <person name="Tomb J.-F."/>
            <person name="Adams M.D."/>
            <person name="Reich C.I."/>
            <person name="Overbeek R."/>
            <person name="Kirkness E.F."/>
            <person name="Weinstock K.G."/>
            <person name="Merrick J.M."/>
            <person name="Glodek A."/>
            <person name="Scott J.L."/>
            <person name="Geoghagen N.S.M."/>
            <person name="Weidman J.F."/>
            <person name="Fuhrmann J.L."/>
            <person name="Nguyen D."/>
            <person name="Utterback T.R."/>
            <person name="Kelley J.M."/>
            <person name="Peterson J.D."/>
            <person name="Sadow P.W."/>
            <person name="Hanna M.C."/>
            <person name="Cotton M.D."/>
            <person name="Roberts K.M."/>
            <person name="Hurst M.A."/>
            <person name="Kaine B.P."/>
            <person name="Borodovsky M."/>
            <person name="Klenk H.-P."/>
            <person name="Fraser C.M."/>
            <person name="Smith H.O."/>
            <person name="Woese C.R."/>
            <person name="Venter J.C."/>
        </authorList>
    </citation>
    <scope>NUCLEOTIDE SEQUENCE [LARGE SCALE GENOMIC DNA]</scope>
    <source>
        <strain>ATCC 43067 / DSM 2661 / JAL-1 / JCM 10045 / NBRC 100440</strain>
    </source>
</reference>
<gene>
    <name evidence="1" type="primary">pyrF</name>
    <name type="ordered locus">MJ0252</name>
</gene>
<comment type="function">
    <text evidence="1">Catalyzes the decarboxylation of orotidine 5'-monophosphate (OMP) to uridine 5'-monophosphate (UMP).</text>
</comment>
<comment type="catalytic activity">
    <reaction evidence="1">
        <text>orotidine 5'-phosphate + H(+) = UMP + CO2</text>
        <dbReference type="Rhea" id="RHEA:11596"/>
        <dbReference type="ChEBI" id="CHEBI:15378"/>
        <dbReference type="ChEBI" id="CHEBI:16526"/>
        <dbReference type="ChEBI" id="CHEBI:57538"/>
        <dbReference type="ChEBI" id="CHEBI:57865"/>
        <dbReference type="EC" id="4.1.1.23"/>
    </reaction>
</comment>
<comment type="pathway">
    <text evidence="1">Pyrimidine metabolism; UMP biosynthesis via de novo pathway; UMP from orotate: step 2/2.</text>
</comment>
<comment type="subunit">
    <text evidence="1">Homodimer.</text>
</comment>
<comment type="similarity">
    <text evidence="1">Belongs to the OMP decarboxylase family. Type 1 subfamily.</text>
</comment>
<comment type="sequence caution" evidence="2">
    <conflict type="erroneous initiation">
        <sequence resource="EMBL-CDS" id="AAB98239"/>
    </conflict>
</comment>
<name>PYRF_METJA</name>
<proteinExistence type="evidence at protein level"/>
<protein>
    <recommendedName>
        <fullName evidence="1">Orotidine 5'-phosphate decarboxylase</fullName>
        <ecNumber evidence="1">4.1.1.23</ecNumber>
    </recommendedName>
    <alternativeName>
        <fullName evidence="1">OMP decarboxylase</fullName>
        <shortName evidence="1">OMPDCase</shortName>
        <shortName evidence="1">OMPdecase</shortName>
    </alternativeName>
</protein>
<accession>Q57700</accession>
<dbReference type="EC" id="4.1.1.23" evidence="1"/>
<dbReference type="EMBL" id="L77117">
    <property type="protein sequence ID" value="AAB98239.1"/>
    <property type="status" value="ALT_INIT"/>
    <property type="molecule type" value="Genomic_DNA"/>
</dbReference>
<dbReference type="PIR" id="E64331">
    <property type="entry name" value="E64331"/>
</dbReference>
<dbReference type="RefSeq" id="WP_064496436.1">
    <property type="nucleotide sequence ID" value="NC_000909.1"/>
</dbReference>
<dbReference type="PDB" id="4LUI">
    <property type="method" value="X-ray"/>
    <property type="resolution" value="1.60 A"/>
    <property type="chains" value="A/B=1-213"/>
</dbReference>
<dbReference type="PDB" id="4LUJ">
    <property type="method" value="X-ray"/>
    <property type="resolution" value="1.60 A"/>
    <property type="chains" value="A/B=1-213"/>
</dbReference>
<dbReference type="PDBsum" id="4LUI"/>
<dbReference type="PDBsum" id="4LUJ"/>
<dbReference type="SMR" id="Q57700"/>
<dbReference type="FunCoup" id="Q57700">
    <property type="interactions" value="110"/>
</dbReference>
<dbReference type="STRING" id="243232.MJ_0252"/>
<dbReference type="PaxDb" id="243232-MJ_0252"/>
<dbReference type="EnsemblBacteria" id="AAB98239">
    <property type="protein sequence ID" value="AAB98239"/>
    <property type="gene ID" value="MJ_0252"/>
</dbReference>
<dbReference type="GeneID" id="1451106"/>
<dbReference type="KEGG" id="mja:MJ_0252"/>
<dbReference type="eggNOG" id="arCOG00081">
    <property type="taxonomic scope" value="Archaea"/>
</dbReference>
<dbReference type="HOGENOM" id="CLU_067069_2_0_2"/>
<dbReference type="InParanoid" id="Q57700"/>
<dbReference type="OrthoDB" id="94124at2157"/>
<dbReference type="PhylomeDB" id="Q57700"/>
<dbReference type="UniPathway" id="UPA00070">
    <property type="reaction ID" value="UER00120"/>
</dbReference>
<dbReference type="EvolutionaryTrace" id="Q57700"/>
<dbReference type="Proteomes" id="UP000000805">
    <property type="component" value="Chromosome"/>
</dbReference>
<dbReference type="GO" id="GO:0005829">
    <property type="term" value="C:cytosol"/>
    <property type="evidence" value="ECO:0000318"/>
    <property type="project" value="GO_Central"/>
</dbReference>
<dbReference type="GO" id="GO:0004590">
    <property type="term" value="F:orotidine-5'-phosphate decarboxylase activity"/>
    <property type="evidence" value="ECO:0000318"/>
    <property type="project" value="GO_Central"/>
</dbReference>
<dbReference type="GO" id="GO:0006207">
    <property type="term" value="P:'de novo' pyrimidine nucleobase biosynthetic process"/>
    <property type="evidence" value="ECO:0000318"/>
    <property type="project" value="GO_Central"/>
</dbReference>
<dbReference type="GO" id="GO:0044205">
    <property type="term" value="P:'de novo' UMP biosynthetic process"/>
    <property type="evidence" value="ECO:0007669"/>
    <property type="project" value="UniProtKB-UniRule"/>
</dbReference>
<dbReference type="CDD" id="cd04725">
    <property type="entry name" value="OMP_decarboxylase_like"/>
    <property type="match status" value="1"/>
</dbReference>
<dbReference type="Gene3D" id="3.20.20.70">
    <property type="entry name" value="Aldolase class I"/>
    <property type="match status" value="1"/>
</dbReference>
<dbReference type="HAMAP" id="MF_01200_A">
    <property type="entry name" value="OMPdecase_type1_A"/>
    <property type="match status" value="1"/>
</dbReference>
<dbReference type="InterPro" id="IPR013785">
    <property type="entry name" value="Aldolase_TIM"/>
</dbReference>
<dbReference type="InterPro" id="IPR014732">
    <property type="entry name" value="OMPdecase"/>
</dbReference>
<dbReference type="InterPro" id="IPR047595">
    <property type="entry name" value="OMPdecase_arc"/>
</dbReference>
<dbReference type="InterPro" id="IPR018089">
    <property type="entry name" value="OMPdecase_AS"/>
</dbReference>
<dbReference type="InterPro" id="IPR001754">
    <property type="entry name" value="OMPdeCOase_dom"/>
</dbReference>
<dbReference type="InterPro" id="IPR011060">
    <property type="entry name" value="RibuloseP-bd_barrel"/>
</dbReference>
<dbReference type="NCBIfam" id="NF010386">
    <property type="entry name" value="PRK13813.1"/>
    <property type="match status" value="1"/>
</dbReference>
<dbReference type="NCBIfam" id="TIGR01740">
    <property type="entry name" value="pyrF"/>
    <property type="match status" value="1"/>
</dbReference>
<dbReference type="PANTHER" id="PTHR32119">
    <property type="entry name" value="OROTIDINE 5'-PHOSPHATE DECARBOXYLASE"/>
    <property type="match status" value="1"/>
</dbReference>
<dbReference type="PANTHER" id="PTHR32119:SF2">
    <property type="entry name" value="OROTIDINE 5'-PHOSPHATE DECARBOXYLASE"/>
    <property type="match status" value="1"/>
</dbReference>
<dbReference type="Pfam" id="PF00215">
    <property type="entry name" value="OMPdecase"/>
    <property type="match status" value="1"/>
</dbReference>
<dbReference type="SMART" id="SM00934">
    <property type="entry name" value="OMPdecase"/>
    <property type="match status" value="1"/>
</dbReference>
<dbReference type="SUPFAM" id="SSF51366">
    <property type="entry name" value="Ribulose-phoshate binding barrel"/>
    <property type="match status" value="1"/>
</dbReference>
<dbReference type="PROSITE" id="PS00156">
    <property type="entry name" value="OMPDECASE"/>
    <property type="match status" value="1"/>
</dbReference>
<keyword id="KW-0002">3D-structure</keyword>
<keyword id="KW-0210">Decarboxylase</keyword>
<keyword id="KW-0456">Lyase</keyword>
<keyword id="KW-0665">Pyrimidine biosynthesis</keyword>
<keyword id="KW-1185">Reference proteome</keyword>
<feature type="chain" id="PRO_0000134610" description="Orotidine 5'-phosphate decarboxylase">
    <location>
        <begin position="1"/>
        <end position="213"/>
    </location>
</feature>
<feature type="active site" description="Proton donor" evidence="1">
    <location>
        <position position="61"/>
    </location>
</feature>
<feature type="binding site" evidence="1">
    <location>
        <position position="9"/>
    </location>
    <ligand>
        <name>substrate</name>
    </ligand>
</feature>
<feature type="binding site" evidence="1">
    <location>
        <position position="31"/>
    </location>
    <ligand>
        <name>substrate</name>
    </ligand>
</feature>
<feature type="binding site" evidence="1">
    <location>
        <begin position="59"/>
        <end position="68"/>
    </location>
    <ligand>
        <name>substrate</name>
    </ligand>
</feature>
<feature type="binding site" evidence="1">
    <location>
        <position position="115"/>
    </location>
    <ligand>
        <name>substrate</name>
    </ligand>
</feature>
<feature type="binding site" evidence="1">
    <location>
        <begin position="166"/>
        <end position="176"/>
    </location>
    <ligand>
        <name>substrate</name>
    </ligand>
</feature>
<feature type="binding site" evidence="1">
    <location>
        <position position="191"/>
    </location>
    <ligand>
        <name>substrate</name>
    </ligand>
</feature>
<feature type="binding site" evidence="1">
    <location>
        <position position="192"/>
    </location>
    <ligand>
        <name>substrate</name>
    </ligand>
</feature>
<feature type="strand" evidence="3">
    <location>
        <begin position="3"/>
        <end position="7"/>
    </location>
</feature>
<feature type="helix" evidence="3">
    <location>
        <begin position="13"/>
        <end position="23"/>
    </location>
</feature>
<feature type="turn" evidence="3">
    <location>
        <begin position="24"/>
        <end position="26"/>
    </location>
</feature>
<feature type="strand" evidence="3">
    <location>
        <begin position="28"/>
        <end position="33"/>
    </location>
</feature>
<feature type="helix" evidence="3">
    <location>
        <begin position="34"/>
        <end position="38"/>
    </location>
</feature>
<feature type="helix" evidence="3">
    <location>
        <begin position="43"/>
        <end position="52"/>
    </location>
</feature>
<feature type="strand" evidence="3">
    <location>
        <begin position="54"/>
        <end position="62"/>
    </location>
</feature>
<feature type="helix" evidence="3">
    <location>
        <begin position="66"/>
        <end position="76"/>
    </location>
</feature>
<feature type="turn" evidence="3">
    <location>
        <begin position="77"/>
        <end position="79"/>
    </location>
</feature>
<feature type="strand" evidence="3">
    <location>
        <begin position="81"/>
        <end position="87"/>
    </location>
</feature>
<feature type="helix" evidence="3">
    <location>
        <begin position="91"/>
        <end position="103"/>
    </location>
</feature>
<feature type="strand" evidence="3">
    <location>
        <begin position="107"/>
        <end position="111"/>
    </location>
</feature>
<feature type="helix" evidence="3">
    <location>
        <begin position="117"/>
        <end position="120"/>
    </location>
</feature>
<feature type="turn" evidence="3">
    <location>
        <begin position="121"/>
        <end position="123"/>
    </location>
</feature>
<feature type="helix" evidence="3">
    <location>
        <begin position="124"/>
        <end position="126"/>
    </location>
</feature>
<feature type="helix" evidence="3">
    <location>
        <begin position="127"/>
        <end position="137"/>
    </location>
</feature>
<feature type="strand" evidence="3">
    <location>
        <begin position="140"/>
        <end position="143"/>
    </location>
</feature>
<feature type="helix" evidence="3">
    <location>
        <begin position="149"/>
        <end position="159"/>
    </location>
</feature>
<feature type="strand" evidence="3">
    <location>
        <begin position="163"/>
        <end position="166"/>
    </location>
</feature>
<feature type="helix" evidence="4">
    <location>
        <begin position="175"/>
        <end position="177"/>
    </location>
</feature>
<feature type="helix" evidence="3">
    <location>
        <begin position="179"/>
        <end position="181"/>
    </location>
</feature>
<feature type="strand" evidence="3">
    <location>
        <begin position="187"/>
        <end position="190"/>
    </location>
</feature>
<feature type="helix" evidence="3">
    <location>
        <begin position="192"/>
        <end position="195"/>
    </location>
</feature>
<feature type="helix" evidence="3">
    <location>
        <begin position="200"/>
        <end position="209"/>
    </location>
</feature>
<evidence type="ECO:0000255" key="1">
    <source>
        <dbReference type="HAMAP-Rule" id="MF_01200"/>
    </source>
</evidence>
<evidence type="ECO:0000305" key="2"/>
<evidence type="ECO:0007829" key="3">
    <source>
        <dbReference type="PDB" id="4LUI"/>
    </source>
</evidence>
<evidence type="ECO:0007829" key="4">
    <source>
        <dbReference type="PDB" id="4LUJ"/>
    </source>
</evidence>
<organism>
    <name type="scientific">Methanocaldococcus jannaschii (strain ATCC 43067 / DSM 2661 / JAL-1 / JCM 10045 / NBRC 100440)</name>
    <name type="common">Methanococcus jannaschii</name>
    <dbReference type="NCBI Taxonomy" id="243232"/>
    <lineage>
        <taxon>Archaea</taxon>
        <taxon>Methanobacteriati</taxon>
        <taxon>Methanobacteriota</taxon>
        <taxon>Methanomada group</taxon>
        <taxon>Methanococci</taxon>
        <taxon>Methanococcales</taxon>
        <taxon>Methanocaldococcaceae</taxon>
        <taxon>Methanocaldococcus</taxon>
    </lineage>
</organism>